<protein>
    <recommendedName>
        <fullName>Achromobactin transport system permease protein CbrC</fullName>
    </recommendedName>
</protein>
<comment type="function">
    <text>Part of the binding-protein-dependent transport system CbrABCD for uptake of the siderophore achromobactin. Probably responsible for the translocation of the substrate across the membrane.</text>
</comment>
<comment type="subcellular location">
    <subcellularLocation>
        <location evidence="2">Cell inner membrane</location>
        <topology evidence="2">Multi-pass membrane protein</topology>
    </subcellularLocation>
</comment>
<comment type="similarity">
    <text evidence="2">Belongs to the binding-protein-dependent transport system permease family. FecCD subfamily.</text>
</comment>
<name>CBRC_DICD3</name>
<feature type="chain" id="PRO_0000059988" description="Achromobactin transport system permease protein CbrC">
    <location>
        <begin position="1"/>
        <end position="349"/>
    </location>
</feature>
<feature type="transmembrane region" description="Helical" evidence="1">
    <location>
        <begin position="32"/>
        <end position="52"/>
    </location>
</feature>
<feature type="transmembrane region" description="Helical" evidence="1">
    <location>
        <begin position="82"/>
        <end position="102"/>
    </location>
</feature>
<feature type="transmembrane region" description="Helical" evidence="1">
    <location>
        <begin position="111"/>
        <end position="131"/>
    </location>
</feature>
<feature type="transmembrane region" description="Helical" evidence="1">
    <location>
        <begin position="138"/>
        <end position="158"/>
    </location>
</feature>
<feature type="transmembrane region" description="Helical" evidence="1">
    <location>
        <begin position="168"/>
        <end position="188"/>
    </location>
</feature>
<feature type="transmembrane region" description="Helical" evidence="1">
    <location>
        <begin position="190"/>
        <end position="210"/>
    </location>
</feature>
<feature type="transmembrane region" description="Helical" evidence="1">
    <location>
        <begin position="216"/>
        <end position="236"/>
    </location>
</feature>
<feature type="transmembrane region" description="Helical" evidence="1">
    <location>
        <begin position="263"/>
        <end position="283"/>
    </location>
</feature>
<feature type="transmembrane region" description="Helical" evidence="1">
    <location>
        <begin position="290"/>
        <end position="310"/>
    </location>
</feature>
<feature type="transmembrane region" description="Helical" evidence="1">
    <location>
        <begin position="325"/>
        <end position="345"/>
    </location>
</feature>
<feature type="sequence conflict" description="In Ref. 1; CAA60668." evidence="2" ref="1">
    <original>V</original>
    <variation>L</variation>
    <location>
        <position position="47"/>
    </location>
</feature>
<feature type="sequence conflict" description="In Ref. 1; CAA60668." evidence="2" ref="1">
    <original>RVQWLR</original>
    <variation>GVEWLA</variation>
    <location>
        <begin position="250"/>
        <end position="255"/>
    </location>
</feature>
<feature type="sequence conflict" description="In Ref. 1; CAA60668." evidence="2" ref="1">
    <original>A</original>
    <variation>R</variation>
    <location>
        <position position="264"/>
    </location>
</feature>
<feature type="sequence conflict" description="In Ref. 1; CAA60668." evidence="2" ref="1">
    <original>G</original>
    <variation>A</variation>
    <location>
        <position position="274"/>
    </location>
</feature>
<feature type="sequence conflict" description="In Ref. 1; CAA60668." evidence="2" ref="1">
    <original>A</original>
    <variation>R</variation>
    <location>
        <position position="287"/>
    </location>
</feature>
<evidence type="ECO:0000255" key="1"/>
<evidence type="ECO:0000305" key="2"/>
<accession>Q47086</accession>
<accession>E0SIF8</accession>
<keyword id="KW-0997">Cell inner membrane</keyword>
<keyword id="KW-1003">Cell membrane</keyword>
<keyword id="KW-0406">Ion transport</keyword>
<keyword id="KW-0408">Iron</keyword>
<keyword id="KW-0410">Iron transport</keyword>
<keyword id="KW-0472">Membrane</keyword>
<keyword id="KW-1185">Reference proteome</keyword>
<keyword id="KW-0812">Transmembrane</keyword>
<keyword id="KW-1133">Transmembrane helix</keyword>
<keyword id="KW-0813">Transport</keyword>
<dbReference type="EMBL" id="X87208">
    <property type="protein sequence ID" value="CAA60668.1"/>
    <property type="molecule type" value="Genomic_DNA"/>
</dbReference>
<dbReference type="EMBL" id="CP002038">
    <property type="protein sequence ID" value="ADM97839.1"/>
    <property type="molecule type" value="Genomic_DNA"/>
</dbReference>
<dbReference type="PIR" id="S54822">
    <property type="entry name" value="S54822"/>
</dbReference>
<dbReference type="RefSeq" id="WP_013317300.1">
    <property type="nucleotide sequence ID" value="NC_014500.1"/>
</dbReference>
<dbReference type="SMR" id="Q47086"/>
<dbReference type="STRING" id="198628.Dda3937_02846"/>
<dbReference type="TCDB" id="3.A.1.14.4">
    <property type="family name" value="the atp-binding cassette (abc) superfamily"/>
</dbReference>
<dbReference type="KEGG" id="ddd:Dda3937_02846"/>
<dbReference type="eggNOG" id="COG0609">
    <property type="taxonomic scope" value="Bacteria"/>
</dbReference>
<dbReference type="HOGENOM" id="CLU_013016_1_1_6"/>
<dbReference type="OrthoDB" id="9055647at2"/>
<dbReference type="Proteomes" id="UP000006859">
    <property type="component" value="Chromosome"/>
</dbReference>
<dbReference type="GO" id="GO:0005886">
    <property type="term" value="C:plasma membrane"/>
    <property type="evidence" value="ECO:0007669"/>
    <property type="project" value="UniProtKB-SubCell"/>
</dbReference>
<dbReference type="GO" id="GO:0022857">
    <property type="term" value="F:transmembrane transporter activity"/>
    <property type="evidence" value="ECO:0007669"/>
    <property type="project" value="InterPro"/>
</dbReference>
<dbReference type="GO" id="GO:0042935">
    <property type="term" value="P:achromobactin transport"/>
    <property type="evidence" value="ECO:0000315"/>
    <property type="project" value="ASAP"/>
</dbReference>
<dbReference type="GO" id="GO:0033214">
    <property type="term" value="P:siderophore-dependent iron import into cell"/>
    <property type="evidence" value="ECO:0007669"/>
    <property type="project" value="TreeGrafter"/>
</dbReference>
<dbReference type="CDD" id="cd06550">
    <property type="entry name" value="TM_ABC_iron-siderophores_like"/>
    <property type="match status" value="1"/>
</dbReference>
<dbReference type="FunFam" id="1.10.3470.10:FF:000001">
    <property type="entry name" value="Vitamin B12 ABC transporter permease BtuC"/>
    <property type="match status" value="1"/>
</dbReference>
<dbReference type="Gene3D" id="1.10.3470.10">
    <property type="entry name" value="ABC transporter involved in vitamin B12 uptake, BtuC"/>
    <property type="match status" value="1"/>
</dbReference>
<dbReference type="InterPro" id="IPR037294">
    <property type="entry name" value="ABC_BtuC-like"/>
</dbReference>
<dbReference type="InterPro" id="IPR000522">
    <property type="entry name" value="ABC_transptr_permease_BtuC"/>
</dbReference>
<dbReference type="PANTHER" id="PTHR30472">
    <property type="entry name" value="FERRIC ENTEROBACTIN TRANSPORT SYSTEM PERMEASE PROTEIN"/>
    <property type="match status" value="1"/>
</dbReference>
<dbReference type="PANTHER" id="PTHR30472:SF24">
    <property type="entry name" value="FERRIC ENTEROBACTIN TRANSPORT SYSTEM PERMEASE PROTEIN FEPG"/>
    <property type="match status" value="1"/>
</dbReference>
<dbReference type="Pfam" id="PF01032">
    <property type="entry name" value="FecCD"/>
    <property type="match status" value="1"/>
</dbReference>
<dbReference type="SUPFAM" id="SSF81345">
    <property type="entry name" value="ABC transporter involved in vitamin B12 uptake, BtuC"/>
    <property type="match status" value="1"/>
</dbReference>
<reference key="1">
    <citation type="journal article" date="1995" name="Mol. Microbiol.">
        <title>Differential expression of two siderophore-dependent iron-acquisition pathways in Erwinia chrysanthemi 3937: characterization of a novel ferrisiderophore permease of the ABC transporter family.</title>
        <authorList>
            <person name="Mahe B."/>
            <person name="Masclaux C."/>
            <person name="Rauscher L."/>
            <person name="Enard C."/>
            <person name="Expert D."/>
        </authorList>
    </citation>
    <scope>NUCLEOTIDE SEQUENCE [GENOMIC DNA]</scope>
    <source>
        <strain>3937</strain>
    </source>
</reference>
<reference key="2">
    <citation type="journal article" date="2011" name="J. Bacteriol.">
        <title>Genome sequence of the plant-pathogenic bacterium Dickeya dadantii 3937.</title>
        <authorList>
            <person name="Glasner J.D."/>
            <person name="Yang C.H."/>
            <person name="Reverchon S."/>
            <person name="Hugouvieux-Cotte-Pattat N."/>
            <person name="Condemine G."/>
            <person name="Bohin J.P."/>
            <person name="Van Gijsegem F."/>
            <person name="Yang S."/>
            <person name="Franza T."/>
            <person name="Expert D."/>
            <person name="Plunkett G. III"/>
            <person name="San Francisco M.J."/>
            <person name="Charkowski A.O."/>
            <person name="Py B."/>
            <person name="Bell K."/>
            <person name="Rauscher L."/>
            <person name="Rodriguez-Palenzuela P."/>
            <person name="Toussaint A."/>
            <person name="Holeva M.C."/>
            <person name="He S.Y."/>
            <person name="Douet V."/>
            <person name="Boccara M."/>
            <person name="Blanco C."/>
            <person name="Toth I."/>
            <person name="Anderson B.D."/>
            <person name="Biehl B.S."/>
            <person name="Mau B."/>
            <person name="Flynn S.M."/>
            <person name="Barras F."/>
            <person name="Lindeberg M."/>
            <person name="Birch P.R."/>
            <person name="Tsuyumu S."/>
            <person name="Shi X."/>
            <person name="Hibbing M."/>
            <person name="Yap M.N."/>
            <person name="Carpentier M."/>
            <person name="Dassa E."/>
            <person name="Umehara M."/>
            <person name="Kim J.F."/>
            <person name="Rusch M."/>
            <person name="Soni P."/>
            <person name="Mayhew G.F."/>
            <person name="Fouts D.E."/>
            <person name="Gill S.R."/>
            <person name="Blattner F.R."/>
            <person name="Keen N.T."/>
            <person name="Perna N.T."/>
        </authorList>
    </citation>
    <scope>NUCLEOTIDE SEQUENCE [LARGE SCALE GENOMIC DNA]</scope>
    <source>
        <strain>3937</strain>
    </source>
</reference>
<gene>
    <name type="primary">cbrC</name>
    <name type="ordered locus">Dda3937_02846</name>
</gene>
<sequence>MDKRGGMDHVLVWRQGRFSRQINLTTVGRVSLALLLVLAVMVASLGVGKLMLSPWEVLRALWSSQPEGAALIVQQLRLPRVVLAALVGGALAVSGLILQAMIRNPLASPDILGITSGASAAAVFYLSFLAATLGAHYLPLAAMIGAATAALAVYWLAWQAGVSPQRLVLTGVGVSALLMAATTFMLVFSPLTTTLSAYVWLTGSVYGASWRETRELGGWLLLIAPWLVLLARQVRVQQLDDGLAQGIGVRVQWLRVALLLLSVALAGAAIAWGGAMAFVGLIAPHIAKRLVAPGFAGQAAMAFLSGAGLVMVADLCGRTLFLPLDLPAGIFVSALGAPFFLYLLIKQRH</sequence>
<organism>
    <name type="scientific">Dickeya dadantii (strain 3937)</name>
    <name type="common">Erwinia chrysanthemi (strain 3937)</name>
    <dbReference type="NCBI Taxonomy" id="198628"/>
    <lineage>
        <taxon>Bacteria</taxon>
        <taxon>Pseudomonadati</taxon>
        <taxon>Pseudomonadota</taxon>
        <taxon>Gammaproteobacteria</taxon>
        <taxon>Enterobacterales</taxon>
        <taxon>Pectobacteriaceae</taxon>
        <taxon>Dickeya</taxon>
    </lineage>
</organism>
<proteinExistence type="inferred from homology"/>